<organism>
    <name type="scientific">Human cytomegalovirus (strain Merlin)</name>
    <name type="common">HHV-5</name>
    <name type="synonym">Human herpesvirus 5</name>
    <dbReference type="NCBI Taxonomy" id="295027"/>
    <lineage>
        <taxon>Viruses</taxon>
        <taxon>Duplodnaviria</taxon>
        <taxon>Heunggongvirae</taxon>
        <taxon>Peploviricota</taxon>
        <taxon>Herviviricetes</taxon>
        <taxon>Herpesvirales</taxon>
        <taxon>Orthoherpesviridae</taxon>
        <taxon>Betaherpesvirinae</taxon>
        <taxon>Cytomegalovirus</taxon>
        <taxon>Cytomegalovirus humanbeta5</taxon>
        <taxon>Human cytomegalovirus</taxon>
    </lineage>
</organism>
<comment type="function">
    <text evidence="2">Plays a role in the down-regulation of the host NKG2D ligand MICA by utilizing the lysosomal pathway for its degradation. In turn, MICA reduction diminishes NK-cell killing of HCMV-infected cells.</text>
</comment>
<comment type="subcellular location">
    <subcellularLocation>
        <location evidence="3">Host membrane</location>
        <topology evidence="3">Single-pass membrane protein</topology>
    </subcellularLocation>
</comment>
<sequence length="80" mass="9062">MSSDSNFDPWIPVCVVVVMTSVVLFAGLHVYLWYVRRQLVAFCLEKVCVRCCGKDETTPLVEDAEPPAELEMVEVSDECY</sequence>
<reference key="1">
    <citation type="journal article" date="2004" name="J. Gen. Virol.">
        <title>Genetic content of wild-type human cytomegalovirus.</title>
        <authorList>
            <person name="Dolan A."/>
            <person name="Cunningham C."/>
            <person name="Hector R.D."/>
            <person name="Hassan-Walker A.F."/>
            <person name="Lee L."/>
            <person name="Addison C."/>
            <person name="Dargan D.J."/>
            <person name="McGeoch D.J."/>
            <person name="Gatherer D."/>
            <person name="Emery V.C."/>
            <person name="Griffiths P.D."/>
            <person name="Sinzger C."/>
            <person name="McSharry B.P."/>
            <person name="Wilkinson G.W.G."/>
            <person name="Davison A.J."/>
        </authorList>
    </citation>
    <scope>NUCLEOTIDE SEQUENCE [LARGE SCALE GENOMIC DNA]</scope>
</reference>
<reference key="2">
    <citation type="journal article" date="2018" name="J. Virol.">
        <title>The Human Cytomegalovirus Protein UL148A Downregulates the NK Cell-Activating Ligand MICA To Avoid NK Cell Attack.</title>
        <authorList>
            <person name="Dassa L."/>
            <person name="Seidel E."/>
            <person name="Oiknine-Djian E."/>
            <person name="Yamin R."/>
            <person name="Wolf D.G."/>
            <person name="Le-Trilling V.T.K."/>
            <person name="Mandelboim O."/>
        </authorList>
    </citation>
    <scope>FUNCTION</scope>
</reference>
<accession>F5HE74</accession>
<protein>
    <recommendedName>
        <fullName>Protein UL148A</fullName>
    </recommendedName>
</protein>
<dbReference type="EMBL" id="AY446894">
    <property type="protein sequence ID" value="AAR31686.1"/>
    <property type="molecule type" value="Genomic_DNA"/>
</dbReference>
<dbReference type="RefSeq" id="YP_081582.1">
    <property type="nucleotide sequence ID" value="NC_006273.2"/>
</dbReference>
<dbReference type="SMR" id="F5HE74"/>
<dbReference type="DNASU" id="3077461"/>
<dbReference type="GeneID" id="3077461"/>
<dbReference type="KEGG" id="vg:3077461"/>
<dbReference type="Proteomes" id="UP000000938">
    <property type="component" value="Segment"/>
</dbReference>
<dbReference type="GO" id="GO:0033644">
    <property type="term" value="C:host cell membrane"/>
    <property type="evidence" value="ECO:0007669"/>
    <property type="project" value="UniProtKB-SubCell"/>
</dbReference>
<dbReference type="GO" id="GO:0016020">
    <property type="term" value="C:membrane"/>
    <property type="evidence" value="ECO:0007669"/>
    <property type="project" value="UniProtKB-KW"/>
</dbReference>
<dbReference type="GO" id="GO:0052170">
    <property type="term" value="P:symbiont-mediated suppression of host innate immune response"/>
    <property type="evidence" value="ECO:0007669"/>
    <property type="project" value="UniProtKB-KW"/>
</dbReference>
<evidence type="ECO:0000255" key="1"/>
<evidence type="ECO:0000269" key="2">
    <source>
    </source>
</evidence>
<evidence type="ECO:0000305" key="3"/>
<gene>
    <name type="primary">UL148A</name>
</gene>
<proteinExistence type="predicted"/>
<name>U148A_HCMVM</name>
<organismHost>
    <name type="scientific">Homo sapiens</name>
    <name type="common">Human</name>
    <dbReference type="NCBI Taxonomy" id="9606"/>
</organismHost>
<keyword id="KW-1043">Host membrane</keyword>
<keyword id="KW-0945">Host-virus interaction</keyword>
<keyword id="KW-1090">Inhibition of host innate immune response by virus</keyword>
<keyword id="KW-0472">Membrane</keyword>
<keyword id="KW-1185">Reference proteome</keyword>
<keyword id="KW-0812">Transmembrane</keyword>
<keyword id="KW-1133">Transmembrane helix</keyword>
<keyword id="KW-0899">Viral immunoevasion</keyword>
<feature type="chain" id="PRO_0000418327" description="Protein UL148A">
    <location>
        <begin position="1"/>
        <end position="80"/>
    </location>
</feature>
<feature type="transmembrane region" description="Helical" evidence="1">
    <location>
        <begin position="10"/>
        <end position="30"/>
    </location>
</feature>